<evidence type="ECO:0000255" key="1"/>
<evidence type="ECO:0000255" key="2">
    <source>
        <dbReference type="PROSITE-ProRule" id="PRU00175"/>
    </source>
</evidence>
<evidence type="ECO:0000256" key="3">
    <source>
        <dbReference type="SAM" id="MobiDB-lite"/>
    </source>
</evidence>
<evidence type="ECO:0000305" key="4"/>
<feature type="chain" id="PRO_0000410919" description="RING finger protein 223">
    <location>
        <begin position="1"/>
        <end position="249"/>
    </location>
</feature>
<feature type="transmembrane region" description="Helical" evidence="1">
    <location>
        <begin position="199"/>
        <end position="219"/>
    </location>
</feature>
<feature type="zinc finger region" description="RING-type" evidence="2">
    <location>
        <begin position="51"/>
        <end position="102"/>
    </location>
</feature>
<feature type="region of interest" description="Disordered" evidence="3">
    <location>
        <begin position="1"/>
        <end position="44"/>
    </location>
</feature>
<feature type="region of interest" description="Disordered" evidence="3">
    <location>
        <begin position="230"/>
        <end position="249"/>
    </location>
</feature>
<feature type="compositionally biased region" description="Low complexity" evidence="3">
    <location>
        <begin position="17"/>
        <end position="44"/>
    </location>
</feature>
<feature type="compositionally biased region" description="Low complexity" evidence="3">
    <location>
        <begin position="235"/>
        <end position="249"/>
    </location>
</feature>
<feature type="sequence conflict" description="In Ref. 1; BAG59196." evidence="4" ref="1">
    <original>P</original>
    <variation>H</variation>
    <location>
        <position position="242"/>
    </location>
</feature>
<organism>
    <name type="scientific">Homo sapiens</name>
    <name type="common">Human</name>
    <dbReference type="NCBI Taxonomy" id="9606"/>
    <lineage>
        <taxon>Eukaryota</taxon>
        <taxon>Metazoa</taxon>
        <taxon>Chordata</taxon>
        <taxon>Craniata</taxon>
        <taxon>Vertebrata</taxon>
        <taxon>Euteleostomi</taxon>
        <taxon>Mammalia</taxon>
        <taxon>Eutheria</taxon>
        <taxon>Euarchontoglires</taxon>
        <taxon>Primates</taxon>
        <taxon>Haplorrhini</taxon>
        <taxon>Catarrhini</taxon>
        <taxon>Hominidae</taxon>
        <taxon>Homo</taxon>
    </lineage>
</organism>
<sequence length="249" mass="26629">MSSGQQVWHTAVPPPRRSSSIASMPRSPSSAGSPRSPGTPGSERVASPLECSICFSGYDNIFKTPKELSCTHVFCLECLARLAAAQPVGRPGGEAVPCPFCRQPTAVPPAGAPALCTSRQLQARMPAHLRREEPVWLEGTKLCCQPLPTTPGREPGFVCVDVGLSKPAEPPAPARDPAPRRGRLARCWARCRDWRRMALVSALLLMLFCVALWPVQCALKTGNLRCLPLPPRPPATSTAASPLGPLTDN</sequence>
<comment type="subcellular location">
    <subcellularLocation>
        <location evidence="4">Membrane</location>
        <topology evidence="4">Single-pass membrane protein</topology>
    </subcellularLocation>
</comment>
<gene>
    <name type="primary">RNF223</name>
</gene>
<reference key="1">
    <citation type="journal article" date="2004" name="Nat. Genet.">
        <title>Complete sequencing and characterization of 21,243 full-length human cDNAs.</title>
        <authorList>
            <person name="Ota T."/>
            <person name="Suzuki Y."/>
            <person name="Nishikawa T."/>
            <person name="Otsuki T."/>
            <person name="Sugiyama T."/>
            <person name="Irie R."/>
            <person name="Wakamatsu A."/>
            <person name="Hayashi K."/>
            <person name="Sato H."/>
            <person name="Nagai K."/>
            <person name="Kimura K."/>
            <person name="Makita H."/>
            <person name="Sekine M."/>
            <person name="Obayashi M."/>
            <person name="Nishi T."/>
            <person name="Shibahara T."/>
            <person name="Tanaka T."/>
            <person name="Ishii S."/>
            <person name="Yamamoto J."/>
            <person name="Saito K."/>
            <person name="Kawai Y."/>
            <person name="Isono Y."/>
            <person name="Nakamura Y."/>
            <person name="Nagahari K."/>
            <person name="Murakami K."/>
            <person name="Yasuda T."/>
            <person name="Iwayanagi T."/>
            <person name="Wagatsuma M."/>
            <person name="Shiratori A."/>
            <person name="Sudo H."/>
            <person name="Hosoiri T."/>
            <person name="Kaku Y."/>
            <person name="Kodaira H."/>
            <person name="Kondo H."/>
            <person name="Sugawara M."/>
            <person name="Takahashi M."/>
            <person name="Kanda K."/>
            <person name="Yokoi T."/>
            <person name="Furuya T."/>
            <person name="Kikkawa E."/>
            <person name="Omura Y."/>
            <person name="Abe K."/>
            <person name="Kamihara K."/>
            <person name="Katsuta N."/>
            <person name="Sato K."/>
            <person name="Tanikawa M."/>
            <person name="Yamazaki M."/>
            <person name="Ninomiya K."/>
            <person name="Ishibashi T."/>
            <person name="Yamashita H."/>
            <person name="Murakawa K."/>
            <person name="Fujimori K."/>
            <person name="Tanai H."/>
            <person name="Kimata M."/>
            <person name="Watanabe M."/>
            <person name="Hiraoka S."/>
            <person name="Chiba Y."/>
            <person name="Ishida S."/>
            <person name="Ono Y."/>
            <person name="Takiguchi S."/>
            <person name="Watanabe S."/>
            <person name="Yosida M."/>
            <person name="Hotuta T."/>
            <person name="Kusano J."/>
            <person name="Kanehori K."/>
            <person name="Takahashi-Fujii A."/>
            <person name="Hara H."/>
            <person name="Tanase T.-O."/>
            <person name="Nomura Y."/>
            <person name="Togiya S."/>
            <person name="Komai F."/>
            <person name="Hara R."/>
            <person name="Takeuchi K."/>
            <person name="Arita M."/>
            <person name="Imose N."/>
            <person name="Musashino K."/>
            <person name="Yuuki H."/>
            <person name="Oshima A."/>
            <person name="Sasaki N."/>
            <person name="Aotsuka S."/>
            <person name="Yoshikawa Y."/>
            <person name="Matsunawa H."/>
            <person name="Ichihara T."/>
            <person name="Shiohata N."/>
            <person name="Sano S."/>
            <person name="Moriya S."/>
            <person name="Momiyama H."/>
            <person name="Satoh N."/>
            <person name="Takami S."/>
            <person name="Terashima Y."/>
            <person name="Suzuki O."/>
            <person name="Nakagawa S."/>
            <person name="Senoh A."/>
            <person name="Mizoguchi H."/>
            <person name="Goto Y."/>
            <person name="Shimizu F."/>
            <person name="Wakebe H."/>
            <person name="Hishigaki H."/>
            <person name="Watanabe T."/>
            <person name="Sugiyama A."/>
            <person name="Takemoto M."/>
            <person name="Kawakami B."/>
            <person name="Yamazaki M."/>
            <person name="Watanabe K."/>
            <person name="Kumagai A."/>
            <person name="Itakura S."/>
            <person name="Fukuzumi Y."/>
            <person name="Fujimori Y."/>
            <person name="Komiyama M."/>
            <person name="Tashiro H."/>
            <person name="Tanigami A."/>
            <person name="Fujiwara T."/>
            <person name="Ono T."/>
            <person name="Yamada K."/>
            <person name="Fujii Y."/>
            <person name="Ozaki K."/>
            <person name="Hirao M."/>
            <person name="Ohmori Y."/>
            <person name="Kawabata A."/>
            <person name="Hikiji T."/>
            <person name="Kobatake N."/>
            <person name="Inagaki H."/>
            <person name="Ikema Y."/>
            <person name="Okamoto S."/>
            <person name="Okitani R."/>
            <person name="Kawakami T."/>
            <person name="Noguchi S."/>
            <person name="Itoh T."/>
            <person name="Shigeta K."/>
            <person name="Senba T."/>
            <person name="Matsumura K."/>
            <person name="Nakajima Y."/>
            <person name="Mizuno T."/>
            <person name="Morinaga M."/>
            <person name="Sasaki M."/>
            <person name="Togashi T."/>
            <person name="Oyama M."/>
            <person name="Hata H."/>
            <person name="Watanabe M."/>
            <person name="Komatsu T."/>
            <person name="Mizushima-Sugano J."/>
            <person name="Satoh T."/>
            <person name="Shirai Y."/>
            <person name="Takahashi Y."/>
            <person name="Nakagawa K."/>
            <person name="Okumura K."/>
            <person name="Nagase T."/>
            <person name="Nomura N."/>
            <person name="Kikuchi H."/>
            <person name="Masuho Y."/>
            <person name="Yamashita R."/>
            <person name="Nakai K."/>
            <person name="Yada T."/>
            <person name="Nakamura Y."/>
            <person name="Ohara O."/>
            <person name="Isogai T."/>
            <person name="Sugano S."/>
        </authorList>
    </citation>
    <scope>NUCLEOTIDE SEQUENCE [LARGE SCALE MRNA]</scope>
    <source>
        <tissue>Cervix</tissue>
    </source>
</reference>
<reference key="2">
    <citation type="journal article" date="2006" name="Nature">
        <title>The DNA sequence and biological annotation of human chromosome 1.</title>
        <authorList>
            <person name="Gregory S.G."/>
            <person name="Barlow K.F."/>
            <person name="McLay K.E."/>
            <person name="Kaul R."/>
            <person name="Swarbreck D."/>
            <person name="Dunham A."/>
            <person name="Scott C.E."/>
            <person name="Howe K.L."/>
            <person name="Woodfine K."/>
            <person name="Spencer C.C.A."/>
            <person name="Jones M.C."/>
            <person name="Gillson C."/>
            <person name="Searle S."/>
            <person name="Zhou Y."/>
            <person name="Kokocinski F."/>
            <person name="McDonald L."/>
            <person name="Evans R."/>
            <person name="Phillips K."/>
            <person name="Atkinson A."/>
            <person name="Cooper R."/>
            <person name="Jones C."/>
            <person name="Hall R.E."/>
            <person name="Andrews T.D."/>
            <person name="Lloyd C."/>
            <person name="Ainscough R."/>
            <person name="Almeida J.P."/>
            <person name="Ambrose K.D."/>
            <person name="Anderson F."/>
            <person name="Andrew R.W."/>
            <person name="Ashwell R.I.S."/>
            <person name="Aubin K."/>
            <person name="Babbage A.K."/>
            <person name="Bagguley C.L."/>
            <person name="Bailey J."/>
            <person name="Beasley H."/>
            <person name="Bethel G."/>
            <person name="Bird C.P."/>
            <person name="Bray-Allen S."/>
            <person name="Brown J.Y."/>
            <person name="Brown A.J."/>
            <person name="Buckley D."/>
            <person name="Burton J."/>
            <person name="Bye J."/>
            <person name="Carder C."/>
            <person name="Chapman J.C."/>
            <person name="Clark S.Y."/>
            <person name="Clarke G."/>
            <person name="Clee C."/>
            <person name="Cobley V."/>
            <person name="Collier R.E."/>
            <person name="Corby N."/>
            <person name="Coville G.J."/>
            <person name="Davies J."/>
            <person name="Deadman R."/>
            <person name="Dunn M."/>
            <person name="Earthrowl M."/>
            <person name="Ellington A.G."/>
            <person name="Errington H."/>
            <person name="Frankish A."/>
            <person name="Frankland J."/>
            <person name="French L."/>
            <person name="Garner P."/>
            <person name="Garnett J."/>
            <person name="Gay L."/>
            <person name="Ghori M.R.J."/>
            <person name="Gibson R."/>
            <person name="Gilby L.M."/>
            <person name="Gillett W."/>
            <person name="Glithero R.J."/>
            <person name="Grafham D.V."/>
            <person name="Griffiths C."/>
            <person name="Griffiths-Jones S."/>
            <person name="Grocock R."/>
            <person name="Hammond S."/>
            <person name="Harrison E.S.I."/>
            <person name="Hart E."/>
            <person name="Haugen E."/>
            <person name="Heath P.D."/>
            <person name="Holmes S."/>
            <person name="Holt K."/>
            <person name="Howden P.J."/>
            <person name="Hunt A.R."/>
            <person name="Hunt S.E."/>
            <person name="Hunter G."/>
            <person name="Isherwood J."/>
            <person name="James R."/>
            <person name="Johnson C."/>
            <person name="Johnson D."/>
            <person name="Joy A."/>
            <person name="Kay M."/>
            <person name="Kershaw J.K."/>
            <person name="Kibukawa M."/>
            <person name="Kimberley A.M."/>
            <person name="King A."/>
            <person name="Knights A.J."/>
            <person name="Lad H."/>
            <person name="Laird G."/>
            <person name="Lawlor S."/>
            <person name="Leongamornlert D.A."/>
            <person name="Lloyd D.M."/>
            <person name="Loveland J."/>
            <person name="Lovell J."/>
            <person name="Lush M.J."/>
            <person name="Lyne R."/>
            <person name="Martin S."/>
            <person name="Mashreghi-Mohammadi M."/>
            <person name="Matthews L."/>
            <person name="Matthews N.S.W."/>
            <person name="McLaren S."/>
            <person name="Milne S."/>
            <person name="Mistry S."/>
            <person name="Moore M.J.F."/>
            <person name="Nickerson T."/>
            <person name="O'Dell C.N."/>
            <person name="Oliver K."/>
            <person name="Palmeiri A."/>
            <person name="Palmer S.A."/>
            <person name="Parker A."/>
            <person name="Patel D."/>
            <person name="Pearce A.V."/>
            <person name="Peck A.I."/>
            <person name="Pelan S."/>
            <person name="Phelps K."/>
            <person name="Phillimore B.J."/>
            <person name="Plumb R."/>
            <person name="Rajan J."/>
            <person name="Raymond C."/>
            <person name="Rouse G."/>
            <person name="Saenphimmachak C."/>
            <person name="Sehra H.K."/>
            <person name="Sheridan E."/>
            <person name="Shownkeen R."/>
            <person name="Sims S."/>
            <person name="Skuce C.D."/>
            <person name="Smith M."/>
            <person name="Steward C."/>
            <person name="Subramanian S."/>
            <person name="Sycamore N."/>
            <person name="Tracey A."/>
            <person name="Tromans A."/>
            <person name="Van Helmond Z."/>
            <person name="Wall M."/>
            <person name="Wallis J.M."/>
            <person name="White S."/>
            <person name="Whitehead S.L."/>
            <person name="Wilkinson J.E."/>
            <person name="Willey D.L."/>
            <person name="Williams H."/>
            <person name="Wilming L."/>
            <person name="Wray P.W."/>
            <person name="Wu Z."/>
            <person name="Coulson A."/>
            <person name="Vaudin M."/>
            <person name="Sulston J.E."/>
            <person name="Durbin R.M."/>
            <person name="Hubbard T."/>
            <person name="Wooster R."/>
            <person name="Dunham I."/>
            <person name="Carter N.P."/>
            <person name="McVean G."/>
            <person name="Ross M.T."/>
            <person name="Harrow J."/>
            <person name="Olson M.V."/>
            <person name="Beck S."/>
            <person name="Rogers J."/>
            <person name="Bentley D.R."/>
        </authorList>
    </citation>
    <scope>NUCLEOTIDE SEQUENCE [LARGE SCALE GENOMIC DNA]</scope>
</reference>
<keyword id="KW-0472">Membrane</keyword>
<keyword id="KW-0479">Metal-binding</keyword>
<keyword id="KW-1267">Proteomics identification</keyword>
<keyword id="KW-1185">Reference proteome</keyword>
<keyword id="KW-0812">Transmembrane</keyword>
<keyword id="KW-1133">Transmembrane helix</keyword>
<keyword id="KW-0862">Zinc</keyword>
<keyword id="KW-0863">Zinc-finger</keyword>
<accession>E7ERA6</accession>
<accession>B4DKI4</accession>
<dbReference type="EMBL" id="AK296576">
    <property type="protein sequence ID" value="BAG59196.1"/>
    <property type="molecule type" value="mRNA"/>
</dbReference>
<dbReference type="EMBL" id="AL390719">
    <property type="status" value="NOT_ANNOTATED_CDS"/>
    <property type="molecule type" value="Genomic_DNA"/>
</dbReference>
<dbReference type="CCDS" id="CCDS53257.1"/>
<dbReference type="RefSeq" id="NP_001192181.1">
    <property type="nucleotide sequence ID" value="NM_001205252.2"/>
</dbReference>
<dbReference type="BioGRID" id="135277">
    <property type="interactions" value="1"/>
</dbReference>
<dbReference type="STRING" id="9606.ENSP00000410533"/>
<dbReference type="GlyGen" id="E7ERA6">
    <property type="glycosylation" value="1 site"/>
</dbReference>
<dbReference type="iPTMnet" id="E7ERA6"/>
<dbReference type="PhosphoSitePlus" id="E7ERA6"/>
<dbReference type="BioMuta" id="RNF223"/>
<dbReference type="jPOST" id="E7ERA6"/>
<dbReference type="MassIVE" id="E7ERA6"/>
<dbReference type="PaxDb" id="9606-ENSP00000410533"/>
<dbReference type="PeptideAtlas" id="E7ERA6"/>
<dbReference type="ProteomicsDB" id="17748"/>
<dbReference type="Antibodypedia" id="68913">
    <property type="antibodies" value="51 antibodies from 9 providers"/>
</dbReference>
<dbReference type="DNASU" id="401934"/>
<dbReference type="Ensembl" id="ENST00000453464.3">
    <property type="protein sequence ID" value="ENSP00000410533.1"/>
    <property type="gene ID" value="ENSG00000237330.3"/>
</dbReference>
<dbReference type="GeneID" id="401934"/>
<dbReference type="KEGG" id="hsa:401934"/>
<dbReference type="MANE-Select" id="ENST00000453464.3">
    <property type="protein sequence ID" value="ENSP00000410533.1"/>
    <property type="RefSeq nucleotide sequence ID" value="NM_001205252.2"/>
    <property type="RefSeq protein sequence ID" value="NP_001192181.1"/>
</dbReference>
<dbReference type="UCSC" id="uc021oen.2">
    <property type="organism name" value="human"/>
</dbReference>
<dbReference type="AGR" id="HGNC:40020"/>
<dbReference type="CTD" id="401934"/>
<dbReference type="DisGeNET" id="401934"/>
<dbReference type="GeneCards" id="RNF223"/>
<dbReference type="HGNC" id="HGNC:40020">
    <property type="gene designation" value="RNF223"/>
</dbReference>
<dbReference type="HPA" id="ENSG00000237330">
    <property type="expression patterns" value="Group enriched (cervix, esophagus, vagina)"/>
</dbReference>
<dbReference type="neXtProt" id="NX_E7ERA6"/>
<dbReference type="OpenTargets" id="ENSG00000237330"/>
<dbReference type="VEuPathDB" id="HostDB:ENSG00000237330"/>
<dbReference type="eggNOG" id="KOG2177">
    <property type="taxonomic scope" value="Eukaryota"/>
</dbReference>
<dbReference type="GeneTree" id="ENSGT00940000163259"/>
<dbReference type="HOGENOM" id="CLU_094432_0_0_1"/>
<dbReference type="InParanoid" id="E7ERA6"/>
<dbReference type="OMA" id="FCVCIDI"/>
<dbReference type="OrthoDB" id="252722at2759"/>
<dbReference type="PAN-GO" id="E7ERA6">
    <property type="GO annotations" value="2 GO annotations based on evolutionary models"/>
</dbReference>
<dbReference type="PhylomeDB" id="E7ERA6"/>
<dbReference type="TreeFam" id="TF337102"/>
<dbReference type="PathwayCommons" id="E7ERA6"/>
<dbReference type="SIGNOR" id="E7ERA6"/>
<dbReference type="BioGRID-ORCS" id="401934">
    <property type="hits" value="19 hits in 1189 CRISPR screens"/>
</dbReference>
<dbReference type="GenomeRNAi" id="401934"/>
<dbReference type="Pharos" id="E7ERA6">
    <property type="development level" value="Tdark"/>
</dbReference>
<dbReference type="PRO" id="PR:E7ERA6"/>
<dbReference type="Proteomes" id="UP000005640">
    <property type="component" value="Chromosome 1"/>
</dbReference>
<dbReference type="RNAct" id="E7ERA6">
    <property type="molecule type" value="protein"/>
</dbReference>
<dbReference type="Bgee" id="ENSG00000237330">
    <property type="expression patterns" value="Expressed in lower esophagus mucosa and 42 other cell types or tissues"/>
</dbReference>
<dbReference type="GO" id="GO:0016020">
    <property type="term" value="C:membrane"/>
    <property type="evidence" value="ECO:0007669"/>
    <property type="project" value="UniProtKB-SubCell"/>
</dbReference>
<dbReference type="GO" id="GO:0061630">
    <property type="term" value="F:ubiquitin protein ligase activity"/>
    <property type="evidence" value="ECO:0000318"/>
    <property type="project" value="GO_Central"/>
</dbReference>
<dbReference type="GO" id="GO:0008270">
    <property type="term" value="F:zinc ion binding"/>
    <property type="evidence" value="ECO:0007669"/>
    <property type="project" value="UniProtKB-KW"/>
</dbReference>
<dbReference type="GO" id="GO:0016567">
    <property type="term" value="P:protein ubiquitination"/>
    <property type="evidence" value="ECO:0000318"/>
    <property type="project" value="GO_Central"/>
</dbReference>
<dbReference type="CDD" id="cd16556">
    <property type="entry name" value="RING-HC_RNF183-like"/>
    <property type="match status" value="1"/>
</dbReference>
<dbReference type="Gene3D" id="3.30.40.10">
    <property type="entry name" value="Zinc/RING finger domain, C3HC4 (zinc finger)"/>
    <property type="match status" value="1"/>
</dbReference>
<dbReference type="InterPro" id="IPR051435">
    <property type="entry name" value="RING_finger_E3_ubiq-ligases"/>
</dbReference>
<dbReference type="InterPro" id="IPR001841">
    <property type="entry name" value="Znf_RING"/>
</dbReference>
<dbReference type="InterPro" id="IPR013083">
    <property type="entry name" value="Znf_RING/FYVE/PHD"/>
</dbReference>
<dbReference type="InterPro" id="IPR017907">
    <property type="entry name" value="Znf_RING_CS"/>
</dbReference>
<dbReference type="PANTHER" id="PTHR22791:SF4">
    <property type="entry name" value="RING FINGER PROTEIN 223"/>
    <property type="match status" value="1"/>
</dbReference>
<dbReference type="PANTHER" id="PTHR22791">
    <property type="entry name" value="RING-TYPE DOMAIN-CONTAINING PROTEIN"/>
    <property type="match status" value="1"/>
</dbReference>
<dbReference type="Pfam" id="PF14634">
    <property type="entry name" value="zf-RING_5"/>
    <property type="match status" value="1"/>
</dbReference>
<dbReference type="SMART" id="SM00184">
    <property type="entry name" value="RING"/>
    <property type="match status" value="1"/>
</dbReference>
<dbReference type="SUPFAM" id="SSF57850">
    <property type="entry name" value="RING/U-box"/>
    <property type="match status" value="1"/>
</dbReference>
<dbReference type="PROSITE" id="PS00518">
    <property type="entry name" value="ZF_RING_1"/>
    <property type="match status" value="1"/>
</dbReference>
<dbReference type="PROSITE" id="PS50089">
    <property type="entry name" value="ZF_RING_2"/>
    <property type="match status" value="1"/>
</dbReference>
<protein>
    <recommendedName>
        <fullName>RING finger protein 223</fullName>
    </recommendedName>
</protein>
<proteinExistence type="evidence at protein level"/>
<name>RN223_HUMAN</name>